<reference key="1">
    <citation type="journal article" date="2009" name="Nature">
        <title>Evolution of pathogenicity and sexual reproduction in eight Candida genomes.</title>
        <authorList>
            <person name="Butler G."/>
            <person name="Rasmussen M.D."/>
            <person name="Lin M.F."/>
            <person name="Santos M.A.S."/>
            <person name="Sakthikumar S."/>
            <person name="Munro C.A."/>
            <person name="Rheinbay E."/>
            <person name="Grabherr M."/>
            <person name="Forche A."/>
            <person name="Reedy J.L."/>
            <person name="Agrafioti I."/>
            <person name="Arnaud M.B."/>
            <person name="Bates S."/>
            <person name="Brown A.J.P."/>
            <person name="Brunke S."/>
            <person name="Costanzo M.C."/>
            <person name="Fitzpatrick D.A."/>
            <person name="de Groot P.W.J."/>
            <person name="Harris D."/>
            <person name="Hoyer L.L."/>
            <person name="Hube B."/>
            <person name="Klis F.M."/>
            <person name="Kodira C."/>
            <person name="Lennard N."/>
            <person name="Logue M.E."/>
            <person name="Martin R."/>
            <person name="Neiman A.M."/>
            <person name="Nikolaou E."/>
            <person name="Quail M.A."/>
            <person name="Quinn J."/>
            <person name="Santos M.C."/>
            <person name="Schmitzberger F.F."/>
            <person name="Sherlock G."/>
            <person name="Shah P."/>
            <person name="Silverstein K.A.T."/>
            <person name="Skrzypek M.S."/>
            <person name="Soll D."/>
            <person name="Staggs R."/>
            <person name="Stansfield I."/>
            <person name="Stumpf M.P.H."/>
            <person name="Sudbery P.E."/>
            <person name="Srikantha T."/>
            <person name="Zeng Q."/>
            <person name="Berman J."/>
            <person name="Berriman M."/>
            <person name="Heitman J."/>
            <person name="Gow N.A.R."/>
            <person name="Lorenz M.C."/>
            <person name="Birren B.W."/>
            <person name="Kellis M."/>
            <person name="Cuomo C.A."/>
        </authorList>
    </citation>
    <scope>NUCLEOTIDE SEQUENCE [LARGE SCALE GENOMIC DNA]</scope>
    <source>
        <strain>ATCC 6260 / CBS 566 / DSM 6381 / JCM 1539 / NBRC 10279 / NRRL Y-324</strain>
    </source>
</reference>
<sequence>MSVRRIAIRCLNYGKPQNPAYNASSSMRIEPIKRTGETRETKKARLVYQSRKRGILESDLLLSRFAKKHLDSLSDSQLDEYDQLLDEPDWDIYYWATKNYDVTPLPDRWKDSEILKMLQKDAQNEDREIMRMPEL</sequence>
<name>SDHF2_PICGU</name>
<feature type="chain" id="PRO_0000383196" description="Succinate dehydrogenase assembly factor 2, mitochondrial">
    <location>
        <begin position="1"/>
        <end position="135"/>
    </location>
</feature>
<proteinExistence type="inferred from homology"/>
<evidence type="ECO:0000255" key="1">
    <source>
        <dbReference type="HAMAP-Rule" id="MF_03057"/>
    </source>
</evidence>
<gene>
    <name type="ORF">PGUG_03318</name>
</gene>
<protein>
    <recommendedName>
        <fullName evidence="1">Succinate dehydrogenase assembly factor 2, mitochondrial</fullName>
        <shortName evidence="1">SDH assembly factor 2</shortName>
        <shortName evidence="1">SDHAF2</shortName>
    </recommendedName>
</protein>
<comment type="function">
    <text evidence="1">Plays an essential role in the assembly of succinate dehydrogenase (SDH), an enzyme complex (also referred to as respiratory complex II) that is a component of both the tricarboxylic acid (TCA) cycle and the mitochondrial electron transport chain, and which couples the oxidation of succinate to fumarate with the reduction of ubiquinone (coenzyme Q) to ubiquinol. Required for flavinylation (covalent attachment of FAD) of the flavoprotein subunit of the SDH catalytic dimer.</text>
</comment>
<comment type="subunit">
    <text evidence="1">Interacts with the flavoprotein subunit within the SDH catalytic dimer.</text>
</comment>
<comment type="subcellular location">
    <subcellularLocation>
        <location evidence="1">Mitochondrion matrix</location>
    </subcellularLocation>
</comment>
<comment type="miscellaneous">
    <text evidence="1">This protein may be expected to contain an N-terminal transit peptide but none has been predicted.</text>
</comment>
<comment type="similarity">
    <text evidence="1">Belongs to the SDHAF2 family.</text>
</comment>
<keyword id="KW-0143">Chaperone</keyword>
<keyword id="KW-0496">Mitochondrion</keyword>
<keyword id="KW-1185">Reference proteome</keyword>
<accession>A5DJ67</accession>
<organism>
    <name type="scientific">Meyerozyma guilliermondii (strain ATCC 6260 / CBS 566 / DSM 6381 / JCM 1539 / NBRC 10279 / NRRL Y-324)</name>
    <name type="common">Yeast</name>
    <name type="synonym">Candida guilliermondii</name>
    <dbReference type="NCBI Taxonomy" id="294746"/>
    <lineage>
        <taxon>Eukaryota</taxon>
        <taxon>Fungi</taxon>
        <taxon>Dikarya</taxon>
        <taxon>Ascomycota</taxon>
        <taxon>Saccharomycotina</taxon>
        <taxon>Pichiomycetes</taxon>
        <taxon>Debaryomycetaceae</taxon>
        <taxon>Meyerozyma</taxon>
    </lineage>
</organism>
<dbReference type="EMBL" id="CH408158">
    <property type="protein sequence ID" value="EDK39220.2"/>
    <property type="molecule type" value="Genomic_DNA"/>
</dbReference>
<dbReference type="RefSeq" id="XP_001483937.2">
    <property type="nucleotide sequence ID" value="XM_001483887.1"/>
</dbReference>
<dbReference type="SMR" id="A5DJ67"/>
<dbReference type="FunCoup" id="A5DJ67">
    <property type="interactions" value="314"/>
</dbReference>
<dbReference type="STRING" id="294746.A5DJ67"/>
<dbReference type="GeneID" id="5126140"/>
<dbReference type="KEGG" id="pgu:PGUG_03318"/>
<dbReference type="VEuPathDB" id="FungiDB:PGUG_03318"/>
<dbReference type="eggNOG" id="KOG3326">
    <property type="taxonomic scope" value="Eukaryota"/>
</dbReference>
<dbReference type="HOGENOM" id="CLU_103054_0_1_1"/>
<dbReference type="InParanoid" id="A5DJ67"/>
<dbReference type="OMA" id="YGKPQNP"/>
<dbReference type="OrthoDB" id="284292at2759"/>
<dbReference type="Proteomes" id="UP000001997">
    <property type="component" value="Unassembled WGS sequence"/>
</dbReference>
<dbReference type="GO" id="GO:0005759">
    <property type="term" value="C:mitochondrial matrix"/>
    <property type="evidence" value="ECO:0000250"/>
    <property type="project" value="UniProtKB"/>
</dbReference>
<dbReference type="GO" id="GO:0006121">
    <property type="term" value="P:mitochondrial electron transport, succinate to ubiquinone"/>
    <property type="evidence" value="ECO:0000250"/>
    <property type="project" value="UniProtKB"/>
</dbReference>
<dbReference type="GO" id="GO:0034553">
    <property type="term" value="P:mitochondrial respiratory chain complex II assembly"/>
    <property type="evidence" value="ECO:0007669"/>
    <property type="project" value="TreeGrafter"/>
</dbReference>
<dbReference type="GO" id="GO:0018293">
    <property type="term" value="P:protein-FAD linkage"/>
    <property type="evidence" value="ECO:0000250"/>
    <property type="project" value="UniProtKB"/>
</dbReference>
<dbReference type="GO" id="GO:0006099">
    <property type="term" value="P:tricarboxylic acid cycle"/>
    <property type="evidence" value="ECO:0007669"/>
    <property type="project" value="TreeGrafter"/>
</dbReference>
<dbReference type="FunFam" id="1.10.150.250:FF:000002">
    <property type="entry name" value="Succinate dehydrogenase assembly factor 2, mitochondrial"/>
    <property type="match status" value="1"/>
</dbReference>
<dbReference type="Gene3D" id="1.10.150.250">
    <property type="entry name" value="Flavinator of succinate dehydrogenase"/>
    <property type="match status" value="1"/>
</dbReference>
<dbReference type="HAMAP" id="MF_03057">
    <property type="entry name" value="SDHAF2"/>
    <property type="match status" value="1"/>
</dbReference>
<dbReference type="InterPro" id="IPR005631">
    <property type="entry name" value="SDH"/>
</dbReference>
<dbReference type="InterPro" id="IPR036714">
    <property type="entry name" value="SDH_sf"/>
</dbReference>
<dbReference type="InterPro" id="IPR028882">
    <property type="entry name" value="SDHAF2"/>
</dbReference>
<dbReference type="PANTHER" id="PTHR12469">
    <property type="entry name" value="PROTEIN EMI5 HOMOLOG, MITOCHONDRIAL"/>
    <property type="match status" value="1"/>
</dbReference>
<dbReference type="PANTHER" id="PTHR12469:SF2">
    <property type="entry name" value="SUCCINATE DEHYDROGENASE ASSEMBLY FACTOR 2, MITOCHONDRIAL"/>
    <property type="match status" value="1"/>
</dbReference>
<dbReference type="Pfam" id="PF03937">
    <property type="entry name" value="Sdh5"/>
    <property type="match status" value="1"/>
</dbReference>
<dbReference type="SUPFAM" id="SSF109910">
    <property type="entry name" value="YgfY-like"/>
    <property type="match status" value="1"/>
</dbReference>